<keyword id="KW-0375">Hydrogen ion transport</keyword>
<keyword id="KW-0406">Ion transport</keyword>
<keyword id="KW-0813">Transport</keyword>
<feature type="chain" id="PRO_0000144644" description="V-type proton ATPase subunit B 2">
    <location>
        <begin position="1"/>
        <end position="483"/>
    </location>
</feature>
<protein>
    <recommendedName>
        <fullName>V-type proton ATPase subunit B 2</fullName>
        <shortName>V-ATPase subunit B 2</shortName>
    </recommendedName>
    <alternativeName>
        <fullName>Vacuolar proton pump subunit B 2</fullName>
    </alternativeName>
</protein>
<dbReference type="EMBL" id="L11873">
    <property type="protein sequence ID" value="AAA81331.1"/>
    <property type="molecule type" value="mRNA"/>
</dbReference>
<dbReference type="SMR" id="Q40079"/>
<dbReference type="ExpressionAtlas" id="Q40079">
    <property type="expression patterns" value="baseline and differential"/>
</dbReference>
<dbReference type="GO" id="GO:0033180">
    <property type="term" value="C:proton-transporting V-type ATPase, V1 domain"/>
    <property type="evidence" value="ECO:0007669"/>
    <property type="project" value="InterPro"/>
</dbReference>
<dbReference type="GO" id="GO:0005524">
    <property type="term" value="F:ATP binding"/>
    <property type="evidence" value="ECO:0007669"/>
    <property type="project" value="InterPro"/>
</dbReference>
<dbReference type="GO" id="GO:0046961">
    <property type="term" value="F:proton-transporting ATPase activity, rotational mechanism"/>
    <property type="evidence" value="ECO:0007669"/>
    <property type="project" value="InterPro"/>
</dbReference>
<dbReference type="GO" id="GO:0046034">
    <property type="term" value="P:ATP metabolic process"/>
    <property type="evidence" value="ECO:0007669"/>
    <property type="project" value="InterPro"/>
</dbReference>
<dbReference type="GO" id="GO:0007035">
    <property type="term" value="P:vacuolar acidification"/>
    <property type="evidence" value="ECO:0007669"/>
    <property type="project" value="TreeGrafter"/>
</dbReference>
<dbReference type="CDD" id="cd18112">
    <property type="entry name" value="ATP-synt_V_A-type_beta_C"/>
    <property type="match status" value="1"/>
</dbReference>
<dbReference type="CDD" id="cd18118">
    <property type="entry name" value="ATP-synt_V_A-type_beta_N"/>
    <property type="match status" value="1"/>
</dbReference>
<dbReference type="CDD" id="cd01135">
    <property type="entry name" value="V_A-ATPase_B"/>
    <property type="match status" value="1"/>
</dbReference>
<dbReference type="FunFam" id="3.40.50.12240:FF:000001">
    <property type="entry name" value="V-type proton ATPase subunit B, brain"/>
    <property type="match status" value="1"/>
</dbReference>
<dbReference type="Gene3D" id="3.40.50.12240">
    <property type="match status" value="1"/>
</dbReference>
<dbReference type="HAMAP" id="MF_00310">
    <property type="entry name" value="ATP_synth_B_arch"/>
    <property type="match status" value="1"/>
</dbReference>
<dbReference type="InterPro" id="IPR055190">
    <property type="entry name" value="ATP-synt_VA_C"/>
</dbReference>
<dbReference type="InterPro" id="IPR020003">
    <property type="entry name" value="ATPase_a/bsu_AS"/>
</dbReference>
<dbReference type="InterPro" id="IPR004100">
    <property type="entry name" value="ATPase_F1/V1/A1_a/bsu_N"/>
</dbReference>
<dbReference type="InterPro" id="IPR000194">
    <property type="entry name" value="ATPase_F1/V1/A1_a/bsu_nucl-bd"/>
</dbReference>
<dbReference type="InterPro" id="IPR005723">
    <property type="entry name" value="ATPase_V1-cplx_bsu"/>
</dbReference>
<dbReference type="InterPro" id="IPR027417">
    <property type="entry name" value="P-loop_NTPase"/>
</dbReference>
<dbReference type="InterPro" id="IPR022879">
    <property type="entry name" value="V-ATPase_su_B/beta"/>
</dbReference>
<dbReference type="NCBIfam" id="NF003235">
    <property type="entry name" value="PRK04196.1"/>
    <property type="match status" value="1"/>
</dbReference>
<dbReference type="NCBIfam" id="TIGR01040">
    <property type="entry name" value="V-ATPase_V1_B"/>
    <property type="match status" value="1"/>
</dbReference>
<dbReference type="PANTHER" id="PTHR43389">
    <property type="entry name" value="V-TYPE PROTON ATPASE SUBUNIT B"/>
    <property type="match status" value="1"/>
</dbReference>
<dbReference type="PANTHER" id="PTHR43389:SF18">
    <property type="entry name" value="VACUOLAR PROTON PUMP SUBUNIT B"/>
    <property type="match status" value="1"/>
</dbReference>
<dbReference type="Pfam" id="PF00006">
    <property type="entry name" value="ATP-synt_ab"/>
    <property type="match status" value="1"/>
</dbReference>
<dbReference type="Pfam" id="PF02874">
    <property type="entry name" value="ATP-synt_ab_N"/>
    <property type="match status" value="1"/>
</dbReference>
<dbReference type="Pfam" id="PF22919">
    <property type="entry name" value="ATP-synt_VA_C"/>
    <property type="match status" value="1"/>
</dbReference>
<dbReference type="PIRSF" id="PIRSF039114">
    <property type="entry name" value="V-ATPsynth_beta/V-ATPase_B"/>
    <property type="match status" value="1"/>
</dbReference>
<dbReference type="SUPFAM" id="SSF52540">
    <property type="entry name" value="P-loop containing nucleoside triphosphate hydrolases"/>
    <property type="match status" value="1"/>
</dbReference>
<dbReference type="PROSITE" id="PS00152">
    <property type="entry name" value="ATPASE_ALPHA_BETA"/>
    <property type="match status" value="1"/>
</dbReference>
<proteinExistence type="evidence at transcript level"/>
<accession>Q40079</accession>
<comment type="function">
    <text>Non-catalytic subunit of the peripheral V1 complex of vacuolar ATPase. V-ATPase is responsible for acidifying a variety of intracellular compartments in eukaryotic cells.</text>
</comment>
<comment type="subunit">
    <text>V-ATPase is a heteromultimeric enzyme composed of a peripheral catalytic V1 complex (main components: subunits A, B, C, D, E, and F) attached to an integral membrane V0 proton pore complex (main component: the proteolipid protein).</text>
</comment>
<comment type="similarity">
    <text evidence="1">Belongs to the ATPase alpha/beta chains family.</text>
</comment>
<sequence>MAPEMEEGTLEIGMEYRTVSGVAGPLVILDKVKGPKYQEIVNIRLGDGTTRRGQVLEVDGEKAVVQVFEGTSGIDNKYTTVQFTGEVLKTPVSLDMLGRIFNGSGKPIDNGPPILPEAYLDISGSSINPSERTYPEEMIQTGISTIDVMNSIARGQKIPLFSAAGLPHNEIAAQICRQAGLVKRLEQSKHAAEGGEEDNFAIVFAAMGVNMETAQFFKRDFEENGSMERVTLFLNLANDPTIERIITPRIALTTAEYLAYECGKHVLVILTDMSSYADALREVSAAREEVPGRRGYPGYMYTDLATIYERAGRIEGRKGSITQIPILTMPNDDITHPTPDLTGYITEGQIYIDRQLHNRQIYPPINVLPSLSRLMKSAIGEGMTRRDHSDVSNQLYANYAIGKDVQAMKAVVGEEALSSEDLLYLEFLDKFERKFVAQGAYDTRNIFQSLDLAWTLLRIFPRELLHRIPAKTLDQFYSRDATH</sequence>
<evidence type="ECO:0000305" key="1"/>
<name>VATB2_HORVU</name>
<reference key="1">
    <citation type="journal article" date="1994" name="Plant Physiol.">
        <title>Two cDNA clones encoding isoforms of the B subunit of the vacuolar ATPase from barley roots.</title>
        <authorList>
            <person name="Berkelman T."/>
            <person name="Houtchens K.A."/>
            <person name="Dupont F.M."/>
        </authorList>
    </citation>
    <scope>NUCLEOTIDE SEQUENCE [MRNA]</scope>
    <source>
        <tissue>Root</tissue>
    </source>
</reference>
<organism>
    <name type="scientific">Hordeum vulgare</name>
    <name type="common">Barley</name>
    <dbReference type="NCBI Taxonomy" id="4513"/>
    <lineage>
        <taxon>Eukaryota</taxon>
        <taxon>Viridiplantae</taxon>
        <taxon>Streptophyta</taxon>
        <taxon>Embryophyta</taxon>
        <taxon>Tracheophyta</taxon>
        <taxon>Spermatophyta</taxon>
        <taxon>Magnoliopsida</taxon>
        <taxon>Liliopsida</taxon>
        <taxon>Poales</taxon>
        <taxon>Poaceae</taxon>
        <taxon>BOP clade</taxon>
        <taxon>Pooideae</taxon>
        <taxon>Triticodae</taxon>
        <taxon>Triticeae</taxon>
        <taxon>Hordeinae</taxon>
        <taxon>Hordeum</taxon>
    </lineage>
</organism>